<keyword id="KW-0963">Cytoplasm</keyword>
<keyword id="KW-0206">Cytoskeleton</keyword>
<keyword id="KW-0967">Endosome</keyword>
<keyword id="KW-0653">Protein transport</keyword>
<keyword id="KW-1185">Reference proteome</keyword>
<keyword id="KW-0813">Transport</keyword>
<keyword id="KW-0833">Ubl conjugation pathway</keyword>
<comment type="function">
    <text evidence="1">May be involved in regulation of NF-kappa-B signaling. May be involved in copper-dependent atp7a trafficking between the trans-Golgi network and vesicles in the cell periphery (By similarity).</text>
</comment>
<comment type="subcellular location">
    <subcellularLocation>
        <location evidence="1">Endosome</location>
    </subcellularLocation>
    <subcellularLocation>
        <location evidence="1">Cytoplasm</location>
        <location evidence="1">Cytoskeleton</location>
        <location evidence="1">Microtubule organizing center</location>
        <location evidence="1">Centrosome</location>
    </subcellularLocation>
</comment>
<comment type="similarity">
    <text evidence="2">Belongs to the CCDC22 family.</text>
</comment>
<comment type="sequence caution" evidence="2">
    <conflict type="frameshift">
        <sequence resource="EMBL-CDS" id="AAH75581"/>
    </conflict>
</comment>
<name>CCD22_XENTR</name>
<evidence type="ECO:0000250" key="1">
    <source>
        <dbReference type="UniProtKB" id="O60826"/>
    </source>
</evidence>
<evidence type="ECO:0000305" key="2"/>
<gene>
    <name type="primary">ccdc22</name>
    <name type="ORF">tgas103k19.1</name>
</gene>
<feature type="chain" id="PRO_0000338402" description="Coiled-coil domain-containing protein 22">
    <location>
        <begin position="1"/>
        <end position="632"/>
    </location>
</feature>
<protein>
    <recommendedName>
        <fullName>Coiled-coil domain-containing protein 22</fullName>
    </recommendedName>
</protein>
<reference key="1">
    <citation type="submission" date="2006-10" db="EMBL/GenBank/DDBJ databases">
        <authorList>
            <consortium name="Sanger Xenopus tropicalis EST/cDNA project"/>
        </authorList>
    </citation>
    <scope>NUCLEOTIDE SEQUENCE [LARGE SCALE MRNA]</scope>
    <source>
        <tissue>Gastrula</tissue>
    </source>
</reference>
<reference key="2">
    <citation type="submission" date="2004-06" db="EMBL/GenBank/DDBJ databases">
        <authorList>
            <consortium name="NIH - Xenopus Gene Collection (XGC) project"/>
        </authorList>
    </citation>
    <scope>NUCLEOTIDE SEQUENCE [LARGE SCALE MRNA]</scope>
    <source>
        <tissue>Embryo</tissue>
    </source>
</reference>
<sequence length="632" mass="72586">MEEVDRILIHSLRSCGTEVPEDVQSIRQFNTELIVEAVVRCLRVINPSLGATLSHVLPPGMSARFRIGTSLAQACQDLGYPGEVGYQTFLYSSEPDIRALLIFLAEKLPRDSPEDAHQPAGKSALLQREIAATIKRQLSLPWLPSSCRICALRRSQNSCRLHRFHAQPLSLATDPTLKSIPDERKEYWQCYLPSVTSQLPHLPSVAASLLERNTSELSAKQEWDAEWKSQGLASRLSPEDYRSRKRQRLQKRIQEQLRQCAQLLAENHLPSSSSQDLTDMLKAFNLDGGSDQKKGSRFTRTQRFTYQQDPHTLKEQMQRAAEILPKKDAQDTDAEQQELSSLQEQIDSIEQEIRGLSESNKRLQLTVSQVEGEVNEMRQSCEEKEKIVRVKKRAVELLPDADNNLVKLQALVDASSHRMANLVGQWESHQVRLSEEYRELKRVQQEQEDESSRWMKDAKDLYEKIRGAADEAKRKEELYKQLLSEYESLPKEVSRAAYTQRILEIVSNIKKQKEEITKILSDTKELQKEINNLTGKVDRTFVVTDELVFKDAKKDEPVRKAYKYLAALHENCSQLIQTIEDTGTILREIRDLEEQIETETTKKTLSNLQKILEDYRAIKQENAQLLARIREA</sequence>
<proteinExistence type="evidence at transcript level"/>
<dbReference type="EMBL" id="CR761632">
    <property type="protein sequence ID" value="CAJ82509.1"/>
    <property type="molecule type" value="mRNA"/>
</dbReference>
<dbReference type="EMBL" id="BC075581">
    <property type="protein sequence ID" value="AAH75581.1"/>
    <property type="status" value="ALT_FRAME"/>
    <property type="molecule type" value="mRNA"/>
</dbReference>
<dbReference type="RefSeq" id="NP_001004994.1">
    <property type="nucleotide sequence ID" value="NM_001004994.1"/>
</dbReference>
<dbReference type="SMR" id="Q28G12"/>
<dbReference type="FunCoup" id="Q28G12">
    <property type="interactions" value="1473"/>
</dbReference>
<dbReference type="STRING" id="8364.ENSXETP00000021730"/>
<dbReference type="PaxDb" id="8364-ENSXETP00000015634"/>
<dbReference type="DNASU" id="448468"/>
<dbReference type="GeneID" id="448468"/>
<dbReference type="KEGG" id="xtr:448468"/>
<dbReference type="CTD" id="28952"/>
<dbReference type="eggNOG" id="KOG1937">
    <property type="taxonomic scope" value="Eukaryota"/>
</dbReference>
<dbReference type="InParanoid" id="Q28G12"/>
<dbReference type="OrthoDB" id="10266736at2759"/>
<dbReference type="Proteomes" id="UP000008143">
    <property type="component" value="Chromosome 8"/>
</dbReference>
<dbReference type="GO" id="GO:0005813">
    <property type="term" value="C:centrosome"/>
    <property type="evidence" value="ECO:0000250"/>
    <property type="project" value="UniProtKB"/>
</dbReference>
<dbReference type="GO" id="GO:0005768">
    <property type="term" value="C:endosome"/>
    <property type="evidence" value="ECO:0007669"/>
    <property type="project" value="UniProtKB-SubCell"/>
</dbReference>
<dbReference type="GO" id="GO:0015031">
    <property type="term" value="P:protein transport"/>
    <property type="evidence" value="ECO:0007669"/>
    <property type="project" value="UniProtKB-KW"/>
</dbReference>
<dbReference type="InterPro" id="IPR008530">
    <property type="entry name" value="CCDC22"/>
</dbReference>
<dbReference type="InterPro" id="IPR048348">
    <property type="entry name" value="CCDC22_CC"/>
</dbReference>
<dbReference type="InterPro" id="IPR048349">
    <property type="entry name" value="CCDC22_N"/>
</dbReference>
<dbReference type="PANTHER" id="PTHR15668:SF4">
    <property type="entry name" value="COILED-COIL DOMAIN-CONTAINING PROTEIN 22"/>
    <property type="match status" value="1"/>
</dbReference>
<dbReference type="PANTHER" id="PTHR15668">
    <property type="entry name" value="JM1 PROTEIN"/>
    <property type="match status" value="1"/>
</dbReference>
<dbReference type="Pfam" id="PF05667">
    <property type="entry name" value="CCDC22_CC"/>
    <property type="match status" value="1"/>
</dbReference>
<dbReference type="Pfam" id="PF21674">
    <property type="entry name" value="CCDC22_N"/>
    <property type="match status" value="1"/>
</dbReference>
<accession>Q28G12</accession>
<accession>Q6DIG1</accession>
<organism>
    <name type="scientific">Xenopus tropicalis</name>
    <name type="common">Western clawed frog</name>
    <name type="synonym">Silurana tropicalis</name>
    <dbReference type="NCBI Taxonomy" id="8364"/>
    <lineage>
        <taxon>Eukaryota</taxon>
        <taxon>Metazoa</taxon>
        <taxon>Chordata</taxon>
        <taxon>Craniata</taxon>
        <taxon>Vertebrata</taxon>
        <taxon>Euteleostomi</taxon>
        <taxon>Amphibia</taxon>
        <taxon>Batrachia</taxon>
        <taxon>Anura</taxon>
        <taxon>Pipoidea</taxon>
        <taxon>Pipidae</taxon>
        <taxon>Xenopodinae</taxon>
        <taxon>Xenopus</taxon>
        <taxon>Silurana</taxon>
    </lineage>
</organism>